<gene>
    <name evidence="1" type="primary">rpmG</name>
    <name type="ordered locus">MHJ_0658</name>
</gene>
<accession>Q4A930</accession>
<feature type="chain" id="PRO_1000059281" description="Large ribosomal subunit protein bL33">
    <location>
        <begin position="1"/>
        <end position="50"/>
    </location>
</feature>
<dbReference type="EMBL" id="AE017243">
    <property type="protein sequence ID" value="AAZ44741.1"/>
    <property type="molecule type" value="Genomic_DNA"/>
</dbReference>
<dbReference type="RefSeq" id="WP_011206510.1">
    <property type="nucleotide sequence ID" value="NC_007295.1"/>
</dbReference>
<dbReference type="SMR" id="Q4A930"/>
<dbReference type="GeneID" id="41334961"/>
<dbReference type="KEGG" id="mhj:MHJ_0658"/>
<dbReference type="eggNOG" id="COG0267">
    <property type="taxonomic scope" value="Bacteria"/>
</dbReference>
<dbReference type="HOGENOM" id="CLU_190949_0_1_14"/>
<dbReference type="Proteomes" id="UP000000548">
    <property type="component" value="Chromosome"/>
</dbReference>
<dbReference type="GO" id="GO:0005737">
    <property type="term" value="C:cytoplasm"/>
    <property type="evidence" value="ECO:0007669"/>
    <property type="project" value="UniProtKB-ARBA"/>
</dbReference>
<dbReference type="GO" id="GO:1990904">
    <property type="term" value="C:ribonucleoprotein complex"/>
    <property type="evidence" value="ECO:0007669"/>
    <property type="project" value="UniProtKB-KW"/>
</dbReference>
<dbReference type="GO" id="GO:0005840">
    <property type="term" value="C:ribosome"/>
    <property type="evidence" value="ECO:0007669"/>
    <property type="project" value="UniProtKB-KW"/>
</dbReference>
<dbReference type="GO" id="GO:0003735">
    <property type="term" value="F:structural constituent of ribosome"/>
    <property type="evidence" value="ECO:0007669"/>
    <property type="project" value="InterPro"/>
</dbReference>
<dbReference type="GO" id="GO:0006412">
    <property type="term" value="P:translation"/>
    <property type="evidence" value="ECO:0007669"/>
    <property type="project" value="UniProtKB-UniRule"/>
</dbReference>
<dbReference type="Gene3D" id="2.20.28.120">
    <property type="entry name" value="Ribosomal protein L33"/>
    <property type="match status" value="1"/>
</dbReference>
<dbReference type="HAMAP" id="MF_00294">
    <property type="entry name" value="Ribosomal_bL33"/>
    <property type="match status" value="1"/>
</dbReference>
<dbReference type="InterPro" id="IPR001705">
    <property type="entry name" value="Ribosomal_bL33"/>
</dbReference>
<dbReference type="InterPro" id="IPR018264">
    <property type="entry name" value="Ribosomal_bL33_CS"/>
</dbReference>
<dbReference type="InterPro" id="IPR038584">
    <property type="entry name" value="Ribosomal_bL33_sf"/>
</dbReference>
<dbReference type="InterPro" id="IPR011332">
    <property type="entry name" value="Ribosomal_zn-bd"/>
</dbReference>
<dbReference type="NCBIfam" id="NF001764">
    <property type="entry name" value="PRK00504.1"/>
    <property type="match status" value="1"/>
</dbReference>
<dbReference type="NCBIfam" id="NF001860">
    <property type="entry name" value="PRK00595.1"/>
    <property type="match status" value="1"/>
</dbReference>
<dbReference type="NCBIfam" id="TIGR01023">
    <property type="entry name" value="rpmG_bact"/>
    <property type="match status" value="1"/>
</dbReference>
<dbReference type="PANTHER" id="PTHR43168">
    <property type="entry name" value="50S RIBOSOMAL PROTEIN L33, CHLOROPLASTIC"/>
    <property type="match status" value="1"/>
</dbReference>
<dbReference type="PANTHER" id="PTHR43168:SF2">
    <property type="entry name" value="LARGE RIBOSOMAL SUBUNIT PROTEIN BL33C"/>
    <property type="match status" value="1"/>
</dbReference>
<dbReference type="Pfam" id="PF00471">
    <property type="entry name" value="Ribosomal_L33"/>
    <property type="match status" value="1"/>
</dbReference>
<dbReference type="SUPFAM" id="SSF57829">
    <property type="entry name" value="Zn-binding ribosomal proteins"/>
    <property type="match status" value="1"/>
</dbReference>
<dbReference type="PROSITE" id="PS00582">
    <property type="entry name" value="RIBOSOMAL_L33"/>
    <property type="match status" value="1"/>
</dbReference>
<sequence>MAREGLTLRCTDCKMENYITKKNKKTKPEKIEVKKHCHKCNKHTLHREKK</sequence>
<keyword id="KW-0687">Ribonucleoprotein</keyword>
<keyword id="KW-0689">Ribosomal protein</keyword>
<reference key="1">
    <citation type="journal article" date="2005" name="J. Bacteriol.">
        <title>Swine and poultry pathogens: the complete genome sequences of two strains of Mycoplasma hyopneumoniae and a strain of Mycoplasma synoviae.</title>
        <authorList>
            <person name="Vasconcelos A.T.R."/>
            <person name="Ferreira H.B."/>
            <person name="Bizarro C.V."/>
            <person name="Bonatto S.L."/>
            <person name="Carvalho M.O."/>
            <person name="Pinto P.M."/>
            <person name="Almeida D.F."/>
            <person name="Almeida L.G.P."/>
            <person name="Almeida R."/>
            <person name="Alves-Junior L."/>
            <person name="Assuncao E.N."/>
            <person name="Azevedo V.A.C."/>
            <person name="Bogo M.R."/>
            <person name="Brigido M.M."/>
            <person name="Brocchi M."/>
            <person name="Burity H.A."/>
            <person name="Camargo A.A."/>
            <person name="Camargo S.S."/>
            <person name="Carepo M.S."/>
            <person name="Carraro D.M."/>
            <person name="de Mattos Cascardo J.C."/>
            <person name="Castro L.A."/>
            <person name="Cavalcanti G."/>
            <person name="Chemale G."/>
            <person name="Collevatti R.G."/>
            <person name="Cunha C.W."/>
            <person name="Dallagiovanna B."/>
            <person name="Dambros B.P."/>
            <person name="Dellagostin O.A."/>
            <person name="Falcao C."/>
            <person name="Fantinatti-Garboggini F."/>
            <person name="Felipe M.S.S."/>
            <person name="Fiorentin L."/>
            <person name="Franco G.R."/>
            <person name="Freitas N.S.A."/>
            <person name="Frias D."/>
            <person name="Grangeiro T.B."/>
            <person name="Grisard E.C."/>
            <person name="Guimaraes C.T."/>
            <person name="Hungria M."/>
            <person name="Jardim S.N."/>
            <person name="Krieger M.A."/>
            <person name="Laurino J.P."/>
            <person name="Lima L.F.A."/>
            <person name="Lopes M.I."/>
            <person name="Loreto E.L.S."/>
            <person name="Madeira H.M.F."/>
            <person name="Manfio G.P."/>
            <person name="Maranhao A.Q."/>
            <person name="Martinkovics C.T."/>
            <person name="Medeiros S.R.B."/>
            <person name="Moreira M.A.M."/>
            <person name="Neiva M."/>
            <person name="Ramalho-Neto C.E."/>
            <person name="Nicolas M.F."/>
            <person name="Oliveira S.C."/>
            <person name="Paixao R.F.C."/>
            <person name="Pedrosa F.O."/>
            <person name="Pena S.D.J."/>
            <person name="Pereira M."/>
            <person name="Pereira-Ferrari L."/>
            <person name="Piffer I."/>
            <person name="Pinto L.S."/>
            <person name="Potrich D.P."/>
            <person name="Salim A.C.M."/>
            <person name="Santos F.R."/>
            <person name="Schmitt R."/>
            <person name="Schneider M.P.C."/>
            <person name="Schrank A."/>
            <person name="Schrank I.S."/>
            <person name="Schuck A.F."/>
            <person name="Seuanez H.N."/>
            <person name="Silva D.W."/>
            <person name="Silva R."/>
            <person name="Silva S.C."/>
            <person name="Soares C.M.A."/>
            <person name="Souza K.R.L."/>
            <person name="Souza R.C."/>
            <person name="Staats C.C."/>
            <person name="Steffens M.B.R."/>
            <person name="Teixeira S.M.R."/>
            <person name="Urmenyi T.P."/>
            <person name="Vainstein M.H."/>
            <person name="Zuccherato L.W."/>
            <person name="Simpson A.J.G."/>
            <person name="Zaha A."/>
        </authorList>
    </citation>
    <scope>NUCLEOTIDE SEQUENCE [LARGE SCALE GENOMIC DNA]</scope>
    <source>
        <strain>J / ATCC 25934 / NCTC 10110</strain>
    </source>
</reference>
<proteinExistence type="inferred from homology"/>
<evidence type="ECO:0000255" key="1">
    <source>
        <dbReference type="HAMAP-Rule" id="MF_00294"/>
    </source>
</evidence>
<evidence type="ECO:0000305" key="2"/>
<comment type="similarity">
    <text evidence="1">Belongs to the bacterial ribosomal protein bL33 family.</text>
</comment>
<name>RL33_MESHJ</name>
<protein>
    <recommendedName>
        <fullName evidence="1">Large ribosomal subunit protein bL33</fullName>
    </recommendedName>
    <alternativeName>
        <fullName evidence="2">50S ribosomal protein L33</fullName>
    </alternativeName>
</protein>
<organism>
    <name type="scientific">Mesomycoplasma hyopneumoniae (strain J / ATCC 25934 / NCTC 10110)</name>
    <name type="common">Mycoplasma hyopneumoniae</name>
    <dbReference type="NCBI Taxonomy" id="262719"/>
    <lineage>
        <taxon>Bacteria</taxon>
        <taxon>Bacillati</taxon>
        <taxon>Mycoplasmatota</taxon>
        <taxon>Mycoplasmoidales</taxon>
        <taxon>Metamycoplasmataceae</taxon>
        <taxon>Mesomycoplasma</taxon>
    </lineage>
</organism>